<sequence length="102" mass="11614">MANKKIRIRLKAYEHRTLDTAAEKIVETATRTGATVAGPVPLPTERSLYTIIRATHKYKDSREQFEMRTHKRLVDIINPTQKTVDALMKLDLPSGVNVEIKL</sequence>
<dbReference type="EMBL" id="CP000829">
    <property type="protein sequence ID" value="ACI60403.1"/>
    <property type="molecule type" value="Genomic_DNA"/>
</dbReference>
<dbReference type="SMR" id="B5XJ35"/>
<dbReference type="KEGG" id="soz:Spy49_0044"/>
<dbReference type="HOGENOM" id="CLU_122625_1_3_9"/>
<dbReference type="Proteomes" id="UP000001039">
    <property type="component" value="Chromosome"/>
</dbReference>
<dbReference type="GO" id="GO:1990904">
    <property type="term" value="C:ribonucleoprotein complex"/>
    <property type="evidence" value="ECO:0007669"/>
    <property type="project" value="UniProtKB-KW"/>
</dbReference>
<dbReference type="GO" id="GO:0005840">
    <property type="term" value="C:ribosome"/>
    <property type="evidence" value="ECO:0007669"/>
    <property type="project" value="UniProtKB-KW"/>
</dbReference>
<dbReference type="GO" id="GO:0003735">
    <property type="term" value="F:structural constituent of ribosome"/>
    <property type="evidence" value="ECO:0007669"/>
    <property type="project" value="InterPro"/>
</dbReference>
<dbReference type="GO" id="GO:0000049">
    <property type="term" value="F:tRNA binding"/>
    <property type="evidence" value="ECO:0007669"/>
    <property type="project" value="UniProtKB-UniRule"/>
</dbReference>
<dbReference type="GO" id="GO:0006412">
    <property type="term" value="P:translation"/>
    <property type="evidence" value="ECO:0007669"/>
    <property type="project" value="UniProtKB-UniRule"/>
</dbReference>
<dbReference type="FunFam" id="3.30.70.600:FF:000001">
    <property type="entry name" value="30S ribosomal protein S10"/>
    <property type="match status" value="1"/>
</dbReference>
<dbReference type="Gene3D" id="3.30.70.600">
    <property type="entry name" value="Ribosomal protein S10 domain"/>
    <property type="match status" value="1"/>
</dbReference>
<dbReference type="HAMAP" id="MF_00508">
    <property type="entry name" value="Ribosomal_uS10"/>
    <property type="match status" value="1"/>
</dbReference>
<dbReference type="InterPro" id="IPR001848">
    <property type="entry name" value="Ribosomal_uS10"/>
</dbReference>
<dbReference type="InterPro" id="IPR018268">
    <property type="entry name" value="Ribosomal_uS10_CS"/>
</dbReference>
<dbReference type="InterPro" id="IPR027486">
    <property type="entry name" value="Ribosomal_uS10_dom"/>
</dbReference>
<dbReference type="InterPro" id="IPR036838">
    <property type="entry name" value="Ribosomal_uS10_dom_sf"/>
</dbReference>
<dbReference type="NCBIfam" id="NF001861">
    <property type="entry name" value="PRK00596.1"/>
    <property type="match status" value="1"/>
</dbReference>
<dbReference type="NCBIfam" id="TIGR01049">
    <property type="entry name" value="rpsJ_bact"/>
    <property type="match status" value="1"/>
</dbReference>
<dbReference type="PANTHER" id="PTHR11700">
    <property type="entry name" value="30S RIBOSOMAL PROTEIN S10 FAMILY MEMBER"/>
    <property type="match status" value="1"/>
</dbReference>
<dbReference type="Pfam" id="PF00338">
    <property type="entry name" value="Ribosomal_S10"/>
    <property type="match status" value="1"/>
</dbReference>
<dbReference type="PRINTS" id="PR00971">
    <property type="entry name" value="RIBOSOMALS10"/>
</dbReference>
<dbReference type="SMART" id="SM01403">
    <property type="entry name" value="Ribosomal_S10"/>
    <property type="match status" value="1"/>
</dbReference>
<dbReference type="SUPFAM" id="SSF54999">
    <property type="entry name" value="Ribosomal protein S10"/>
    <property type="match status" value="1"/>
</dbReference>
<dbReference type="PROSITE" id="PS00361">
    <property type="entry name" value="RIBOSOMAL_S10"/>
    <property type="match status" value="1"/>
</dbReference>
<name>RS10_STRPZ</name>
<organism>
    <name type="scientific">Streptococcus pyogenes serotype M49 (strain NZ131)</name>
    <dbReference type="NCBI Taxonomy" id="471876"/>
    <lineage>
        <taxon>Bacteria</taxon>
        <taxon>Bacillati</taxon>
        <taxon>Bacillota</taxon>
        <taxon>Bacilli</taxon>
        <taxon>Lactobacillales</taxon>
        <taxon>Streptococcaceae</taxon>
        <taxon>Streptococcus</taxon>
    </lineage>
</organism>
<gene>
    <name evidence="1" type="primary">rpsJ</name>
    <name type="ordered locus">Spy49_0044</name>
</gene>
<reference key="1">
    <citation type="journal article" date="2008" name="J. Bacteriol.">
        <title>Genome sequence of a nephritogenic and highly transformable M49 strain of Streptococcus pyogenes.</title>
        <authorList>
            <person name="McShan W.M."/>
            <person name="Ferretti J.J."/>
            <person name="Karasawa T."/>
            <person name="Suvorov A.N."/>
            <person name="Lin S."/>
            <person name="Qin B."/>
            <person name="Jia H."/>
            <person name="Kenton S."/>
            <person name="Najar F."/>
            <person name="Wu H."/>
            <person name="Scott J."/>
            <person name="Roe B.A."/>
            <person name="Savic D.J."/>
        </authorList>
    </citation>
    <scope>NUCLEOTIDE SEQUENCE [LARGE SCALE GENOMIC DNA]</scope>
    <source>
        <strain>NZ131</strain>
    </source>
</reference>
<accession>B5XJ35</accession>
<keyword id="KW-0687">Ribonucleoprotein</keyword>
<keyword id="KW-0689">Ribosomal protein</keyword>
<feature type="chain" id="PRO_1000127192" description="Small ribosomal subunit protein uS10">
    <location>
        <begin position="1"/>
        <end position="102"/>
    </location>
</feature>
<proteinExistence type="inferred from homology"/>
<evidence type="ECO:0000255" key="1">
    <source>
        <dbReference type="HAMAP-Rule" id="MF_00508"/>
    </source>
</evidence>
<evidence type="ECO:0000305" key="2"/>
<comment type="function">
    <text evidence="1">Involved in the binding of tRNA to the ribosomes.</text>
</comment>
<comment type="subunit">
    <text evidence="1">Part of the 30S ribosomal subunit.</text>
</comment>
<comment type="similarity">
    <text evidence="1">Belongs to the universal ribosomal protein uS10 family.</text>
</comment>
<protein>
    <recommendedName>
        <fullName evidence="1">Small ribosomal subunit protein uS10</fullName>
    </recommendedName>
    <alternativeName>
        <fullName evidence="2">30S ribosomal protein S10</fullName>
    </alternativeName>
</protein>